<comment type="function">
    <text evidence="1">Antimicrobial peptide.</text>
</comment>
<comment type="subcellular location">
    <subcellularLocation>
        <location evidence="2">Secreted</location>
    </subcellularLocation>
</comment>
<comment type="tissue specificity">
    <text evidence="5">Expressed by the skin glands.</text>
</comment>
<comment type="mass spectrometry"/>
<comment type="mass spectrometry">
    <text>Oxidized.</text>
</comment>
<comment type="similarity">
    <text evidence="4">Belongs to the frog skin active peptide (FSAP) family. Brevinin subfamily.</text>
</comment>
<keyword id="KW-0878">Amphibian defense peptide</keyword>
<keyword id="KW-0929">Antimicrobial</keyword>
<keyword id="KW-0903">Direct protein sequencing</keyword>
<keyword id="KW-1015">Disulfide bond</keyword>
<keyword id="KW-0558">Oxidation</keyword>
<keyword id="KW-0964">Secreted</keyword>
<accession>C0HL48</accession>
<protein>
    <recommendedName>
        <fullName evidence="3">Brevinin-1ITb</fullName>
    </recommendedName>
</protein>
<sequence>IVPFLLGMVPKLICLITKKC</sequence>
<organism evidence="3">
    <name type="scientific">Rana italica</name>
    <name type="common">Italian stream frog</name>
    <name type="synonym">Rana graeca italica</name>
    <dbReference type="NCBI Taxonomy" id="147302"/>
    <lineage>
        <taxon>Eukaryota</taxon>
        <taxon>Metazoa</taxon>
        <taxon>Chordata</taxon>
        <taxon>Craniata</taxon>
        <taxon>Vertebrata</taxon>
        <taxon>Euteleostomi</taxon>
        <taxon>Amphibia</taxon>
        <taxon>Batrachia</taxon>
        <taxon>Anura</taxon>
        <taxon>Neobatrachia</taxon>
        <taxon>Ranoidea</taxon>
        <taxon>Ranidae</taxon>
        <taxon>Rana</taxon>
        <taxon>Rana</taxon>
    </lineage>
</organism>
<name>BR1B_RANIT</name>
<reference evidence="4" key="1">
    <citation type="journal article" date="2017" name="J. Pept. Sci.">
        <title>Cytotoxic peptides with insulin-releasing activities from skin secretions of the Italian stream frog Rana italica (Ranidae).</title>
        <authorList>
            <person name="Conlon J.M."/>
            <person name="Musale V."/>
            <person name="Attoub S."/>
            <person name="Mangoni M.L."/>
            <person name="Leprince J."/>
            <person name="Coquet L."/>
            <person name="Jouenne T."/>
            <person name="Abdel-Wahab Y.H.A."/>
            <person name="Flatt P.R."/>
            <person name="Rinaldi A.C."/>
        </authorList>
    </citation>
    <scope>PROTEIN SEQUENCE</scope>
    <scope>FUNCTION</scope>
    <scope>SUBCELLULAR LOCATION</scope>
    <scope>MASS SPECTROMETRY</scope>
    <scope>OXIDATION AT MET-8</scope>
    <scope>DISULFIDE BOND</scope>
    <source>
        <tissue evidence="3">Skin secretion</tissue>
    </source>
</reference>
<evidence type="ECO:0000250" key="1">
    <source>
        <dbReference type="UniProtKB" id="C0HL47"/>
    </source>
</evidence>
<evidence type="ECO:0000269" key="2">
    <source>
    </source>
</evidence>
<evidence type="ECO:0000303" key="3">
    <source>
    </source>
</evidence>
<evidence type="ECO:0000305" key="4"/>
<evidence type="ECO:0000305" key="5">
    <source>
    </source>
</evidence>
<dbReference type="GO" id="GO:0005576">
    <property type="term" value="C:extracellular region"/>
    <property type="evidence" value="ECO:0007669"/>
    <property type="project" value="UniProtKB-SubCell"/>
</dbReference>
<dbReference type="GO" id="GO:0098542">
    <property type="term" value="P:defense response to other organism"/>
    <property type="evidence" value="ECO:0007669"/>
    <property type="project" value="InterPro"/>
</dbReference>
<dbReference type="InterPro" id="IPR012520">
    <property type="entry name" value="Antimicrobial_frog_1"/>
</dbReference>
<dbReference type="Pfam" id="PF08018">
    <property type="entry name" value="Antimicrobial_1"/>
    <property type="match status" value="1"/>
</dbReference>
<proteinExistence type="evidence at protein level"/>
<feature type="peptide" id="PRO_0000442263" description="Brevinin-1ITb" evidence="2">
    <location>
        <begin position="1"/>
        <end position="20"/>
    </location>
</feature>
<feature type="modified residue" description="Methionine sulfoxide; partial" evidence="2">
    <location>
        <position position="8"/>
    </location>
</feature>
<feature type="disulfide bond" evidence="2">
    <location>
        <begin position="14"/>
        <end position="20"/>
    </location>
</feature>